<gene>
    <name evidence="1" type="primary">dnaK</name>
    <name type="ordered locus">GSU0033</name>
</gene>
<reference key="1">
    <citation type="journal article" date="2003" name="Science">
        <title>Genome of Geobacter sulfurreducens: metal reduction in subsurface environments.</title>
        <authorList>
            <person name="Methe B.A."/>
            <person name="Nelson K.E."/>
            <person name="Eisen J.A."/>
            <person name="Paulsen I.T."/>
            <person name="Nelson W.C."/>
            <person name="Heidelberg J.F."/>
            <person name="Wu D."/>
            <person name="Wu M."/>
            <person name="Ward N.L."/>
            <person name="Beanan M.J."/>
            <person name="Dodson R.J."/>
            <person name="Madupu R."/>
            <person name="Brinkac L.M."/>
            <person name="Daugherty S.C."/>
            <person name="DeBoy R.T."/>
            <person name="Durkin A.S."/>
            <person name="Gwinn M.L."/>
            <person name="Kolonay J.F."/>
            <person name="Sullivan S.A."/>
            <person name="Haft D.H."/>
            <person name="Selengut J."/>
            <person name="Davidsen T.M."/>
            <person name="Zafar N."/>
            <person name="White O."/>
            <person name="Tran B."/>
            <person name="Romero C."/>
            <person name="Forberger H.A."/>
            <person name="Weidman J.F."/>
            <person name="Khouri H.M."/>
            <person name="Feldblyum T.V."/>
            <person name="Utterback T.R."/>
            <person name="Van Aken S.E."/>
            <person name="Lovley D.R."/>
            <person name="Fraser C.M."/>
        </authorList>
    </citation>
    <scope>NUCLEOTIDE SEQUENCE [LARGE SCALE GENOMIC DNA]</scope>
    <source>
        <strain>ATCC 51573 / DSM 12127 / PCA</strain>
    </source>
</reference>
<proteinExistence type="inferred from homology"/>
<name>DNAK_GEOSL</name>
<feature type="chain" id="PRO_0000225967" description="Chaperone protein DnaK">
    <location>
        <begin position="1"/>
        <end position="636"/>
    </location>
</feature>
<feature type="region of interest" description="Disordered" evidence="2">
    <location>
        <begin position="602"/>
        <end position="636"/>
    </location>
</feature>
<feature type="compositionally biased region" description="Acidic residues" evidence="2">
    <location>
        <begin position="626"/>
        <end position="636"/>
    </location>
</feature>
<feature type="modified residue" description="Phosphothreonine; by autocatalysis" evidence="1">
    <location>
        <position position="198"/>
    </location>
</feature>
<accession>Q74H59</accession>
<organism>
    <name type="scientific">Geobacter sulfurreducens (strain ATCC 51573 / DSM 12127 / PCA)</name>
    <dbReference type="NCBI Taxonomy" id="243231"/>
    <lineage>
        <taxon>Bacteria</taxon>
        <taxon>Pseudomonadati</taxon>
        <taxon>Thermodesulfobacteriota</taxon>
        <taxon>Desulfuromonadia</taxon>
        <taxon>Geobacterales</taxon>
        <taxon>Geobacteraceae</taxon>
        <taxon>Geobacter</taxon>
    </lineage>
</organism>
<keyword id="KW-0067">ATP-binding</keyword>
<keyword id="KW-0143">Chaperone</keyword>
<keyword id="KW-0547">Nucleotide-binding</keyword>
<keyword id="KW-0597">Phosphoprotein</keyword>
<keyword id="KW-1185">Reference proteome</keyword>
<keyword id="KW-0346">Stress response</keyword>
<sequence>MSKVIGIDLGTTNSCVAVMEGGEPVVIANAEGSRTTPSMVAFAESGERLVGQQAKRQAVTNPENTLFAIKRLIGRKYDTEEVRKDISISPFKIVKADNGDAWVEARGKMYSAPEISAMVLQKMKQTAEDYLGETVTDAVITVPAYFNDSQRQATKDAGKIAGLNVLRIINEPTAAALAYGLDKKKDEKIAVFDLGGGTFDISILELGDGVFEVKSTNGDTFLGGEDFDQRVIDWIADEFKKDQGIDLRGDKMALQRLKEAAEKAKCELSTSMETDINLPFITADATGPKHLTMKLSRAKLEALCADLLNKLEGPCRTALKDAGLSPSEVDEVILVGGMTRMPAVQKRVQEIFGKVPNKGVNPDEVVAIGAAIQGGVLRGDVKDVLLLDVTPLSLGIETLGSVMTKLIEKNTTIPCRKSQVFSTASDNQPAVTIHVLQGEREMAIDNKTLGNFELTGIPPAPRGVPQIEVTFDIDANGIVHVSAKDLGTGKEQSIRITASSGLSKEEIDKMVKEAEAHSAEDKKKRELVEARNHADTLSYSTEKSLKEYGDKIGADEKAKIEECLANLRKAMEGSDVEVLKKATDELTQASHKLAEAVYAKAQAEGAQPGGEAAGEASAKDEKVVDADFEEVKDDKK</sequence>
<comment type="function">
    <text evidence="1">Acts as a chaperone.</text>
</comment>
<comment type="induction">
    <text evidence="1">By stress conditions e.g. heat shock.</text>
</comment>
<comment type="similarity">
    <text evidence="1">Belongs to the heat shock protein 70 family.</text>
</comment>
<evidence type="ECO:0000255" key="1">
    <source>
        <dbReference type="HAMAP-Rule" id="MF_00332"/>
    </source>
</evidence>
<evidence type="ECO:0000256" key="2">
    <source>
        <dbReference type="SAM" id="MobiDB-lite"/>
    </source>
</evidence>
<protein>
    <recommendedName>
        <fullName evidence="1">Chaperone protein DnaK</fullName>
    </recommendedName>
    <alternativeName>
        <fullName evidence="1">HSP70</fullName>
    </alternativeName>
    <alternativeName>
        <fullName evidence="1">Heat shock 70 kDa protein</fullName>
    </alternativeName>
    <alternativeName>
        <fullName evidence="1">Heat shock protein 70</fullName>
    </alternativeName>
</protein>
<dbReference type="EMBL" id="AE017180">
    <property type="protein sequence ID" value="AAR33368.1"/>
    <property type="molecule type" value="Genomic_DNA"/>
</dbReference>
<dbReference type="RefSeq" id="NP_951095.1">
    <property type="nucleotide sequence ID" value="NC_002939.5"/>
</dbReference>
<dbReference type="RefSeq" id="WP_010940711.1">
    <property type="nucleotide sequence ID" value="NC_002939.5"/>
</dbReference>
<dbReference type="SMR" id="Q74H59"/>
<dbReference type="FunCoup" id="Q74H59">
    <property type="interactions" value="684"/>
</dbReference>
<dbReference type="STRING" id="243231.GSU0033"/>
<dbReference type="EnsemblBacteria" id="AAR33368">
    <property type="protein sequence ID" value="AAR33368"/>
    <property type="gene ID" value="GSU0033"/>
</dbReference>
<dbReference type="KEGG" id="gsu:GSU0033"/>
<dbReference type="PATRIC" id="fig|243231.5.peg.34"/>
<dbReference type="eggNOG" id="COG0443">
    <property type="taxonomic scope" value="Bacteria"/>
</dbReference>
<dbReference type="HOGENOM" id="CLU_005965_2_1_7"/>
<dbReference type="InParanoid" id="Q74H59"/>
<dbReference type="OrthoDB" id="9766019at2"/>
<dbReference type="Proteomes" id="UP000000577">
    <property type="component" value="Chromosome"/>
</dbReference>
<dbReference type="GO" id="GO:0005829">
    <property type="term" value="C:cytosol"/>
    <property type="evidence" value="ECO:0000318"/>
    <property type="project" value="GO_Central"/>
</dbReference>
<dbReference type="GO" id="GO:0005524">
    <property type="term" value="F:ATP binding"/>
    <property type="evidence" value="ECO:0007669"/>
    <property type="project" value="UniProtKB-UniRule"/>
</dbReference>
<dbReference type="GO" id="GO:0016887">
    <property type="term" value="F:ATP hydrolysis activity"/>
    <property type="evidence" value="ECO:0000318"/>
    <property type="project" value="GO_Central"/>
</dbReference>
<dbReference type="GO" id="GO:0140662">
    <property type="term" value="F:ATP-dependent protein folding chaperone"/>
    <property type="evidence" value="ECO:0007669"/>
    <property type="project" value="InterPro"/>
</dbReference>
<dbReference type="GO" id="GO:0031072">
    <property type="term" value="F:heat shock protein binding"/>
    <property type="evidence" value="ECO:0000318"/>
    <property type="project" value="GO_Central"/>
</dbReference>
<dbReference type="GO" id="GO:0044183">
    <property type="term" value="F:protein folding chaperone"/>
    <property type="evidence" value="ECO:0000318"/>
    <property type="project" value="GO_Central"/>
</dbReference>
<dbReference type="GO" id="GO:0051082">
    <property type="term" value="F:unfolded protein binding"/>
    <property type="evidence" value="ECO:0007669"/>
    <property type="project" value="InterPro"/>
</dbReference>
<dbReference type="GO" id="GO:0051085">
    <property type="term" value="P:chaperone cofactor-dependent protein refolding"/>
    <property type="evidence" value="ECO:0000318"/>
    <property type="project" value="GO_Central"/>
</dbReference>
<dbReference type="GO" id="GO:0042026">
    <property type="term" value="P:protein refolding"/>
    <property type="evidence" value="ECO:0000318"/>
    <property type="project" value="GO_Central"/>
</dbReference>
<dbReference type="CDD" id="cd10234">
    <property type="entry name" value="ASKHA_NBD_HSP70_DnaK-like"/>
    <property type="match status" value="1"/>
</dbReference>
<dbReference type="FunFam" id="2.60.34.10:FF:000014">
    <property type="entry name" value="Chaperone protein DnaK HSP70"/>
    <property type="match status" value="1"/>
</dbReference>
<dbReference type="FunFam" id="3.30.420.40:FF:000020">
    <property type="entry name" value="Chaperone protein HscA homolog"/>
    <property type="match status" value="1"/>
</dbReference>
<dbReference type="FunFam" id="3.30.30.30:FF:000003">
    <property type="entry name" value="Heat shock protein 9"/>
    <property type="match status" value="1"/>
</dbReference>
<dbReference type="FunFam" id="1.20.1270.10:FF:000001">
    <property type="entry name" value="Molecular chaperone DnaK"/>
    <property type="match status" value="1"/>
</dbReference>
<dbReference type="FunFam" id="3.30.420.40:FF:000004">
    <property type="entry name" value="Molecular chaperone DnaK"/>
    <property type="match status" value="1"/>
</dbReference>
<dbReference type="FunFam" id="3.90.640.10:FF:000003">
    <property type="entry name" value="Molecular chaperone DnaK"/>
    <property type="match status" value="1"/>
</dbReference>
<dbReference type="Gene3D" id="1.20.1270.10">
    <property type="match status" value="1"/>
</dbReference>
<dbReference type="Gene3D" id="3.30.420.40">
    <property type="match status" value="2"/>
</dbReference>
<dbReference type="Gene3D" id="3.90.640.10">
    <property type="entry name" value="Actin, Chain A, domain 4"/>
    <property type="match status" value="1"/>
</dbReference>
<dbReference type="Gene3D" id="2.60.34.10">
    <property type="entry name" value="Substrate Binding Domain Of DNAk, Chain A, domain 1"/>
    <property type="match status" value="1"/>
</dbReference>
<dbReference type="HAMAP" id="MF_00332">
    <property type="entry name" value="DnaK"/>
    <property type="match status" value="1"/>
</dbReference>
<dbReference type="InterPro" id="IPR043129">
    <property type="entry name" value="ATPase_NBD"/>
</dbReference>
<dbReference type="InterPro" id="IPR012725">
    <property type="entry name" value="Chaperone_DnaK"/>
</dbReference>
<dbReference type="InterPro" id="IPR018181">
    <property type="entry name" value="Heat_shock_70_CS"/>
</dbReference>
<dbReference type="InterPro" id="IPR029048">
    <property type="entry name" value="HSP70_C_sf"/>
</dbReference>
<dbReference type="InterPro" id="IPR029047">
    <property type="entry name" value="HSP70_peptide-bd_sf"/>
</dbReference>
<dbReference type="InterPro" id="IPR013126">
    <property type="entry name" value="Hsp_70_fam"/>
</dbReference>
<dbReference type="NCBIfam" id="NF001413">
    <property type="entry name" value="PRK00290.1"/>
    <property type="match status" value="1"/>
</dbReference>
<dbReference type="NCBIfam" id="NF003520">
    <property type="entry name" value="PRK05183.1"/>
    <property type="match status" value="1"/>
</dbReference>
<dbReference type="NCBIfam" id="TIGR02350">
    <property type="entry name" value="prok_dnaK"/>
    <property type="match status" value="1"/>
</dbReference>
<dbReference type="PANTHER" id="PTHR19375">
    <property type="entry name" value="HEAT SHOCK PROTEIN 70KDA"/>
    <property type="match status" value="1"/>
</dbReference>
<dbReference type="Pfam" id="PF00012">
    <property type="entry name" value="HSP70"/>
    <property type="match status" value="1"/>
</dbReference>
<dbReference type="PRINTS" id="PR00301">
    <property type="entry name" value="HEATSHOCK70"/>
</dbReference>
<dbReference type="SUPFAM" id="SSF53067">
    <property type="entry name" value="Actin-like ATPase domain"/>
    <property type="match status" value="2"/>
</dbReference>
<dbReference type="SUPFAM" id="SSF100934">
    <property type="entry name" value="Heat shock protein 70kD (HSP70), C-terminal subdomain"/>
    <property type="match status" value="1"/>
</dbReference>
<dbReference type="SUPFAM" id="SSF100920">
    <property type="entry name" value="Heat shock protein 70kD (HSP70), peptide-binding domain"/>
    <property type="match status" value="1"/>
</dbReference>
<dbReference type="PROSITE" id="PS00297">
    <property type="entry name" value="HSP70_1"/>
    <property type="match status" value="1"/>
</dbReference>
<dbReference type="PROSITE" id="PS00329">
    <property type="entry name" value="HSP70_2"/>
    <property type="match status" value="1"/>
</dbReference>
<dbReference type="PROSITE" id="PS01036">
    <property type="entry name" value="HSP70_3"/>
    <property type="match status" value="1"/>
</dbReference>